<organism>
    <name type="scientific">Schizosaccharomyces pombe (strain 972 / ATCC 24843)</name>
    <name type="common">Fission yeast</name>
    <dbReference type="NCBI Taxonomy" id="284812"/>
    <lineage>
        <taxon>Eukaryota</taxon>
        <taxon>Fungi</taxon>
        <taxon>Dikarya</taxon>
        <taxon>Ascomycota</taxon>
        <taxon>Taphrinomycotina</taxon>
        <taxon>Schizosaccharomycetes</taxon>
        <taxon>Schizosaccharomycetales</taxon>
        <taxon>Schizosaccharomycetaceae</taxon>
        <taxon>Schizosaccharomyces</taxon>
    </lineage>
</organism>
<proteinExistence type="evidence at protein level"/>
<sequence length="689" mass="79890">MSSKLTVYQATTSMADSPRDPFQSRSQLPRFLATSVKKPNLKKPSVNSANETKNPKLASLEFQLENLKNDLKRKELEFEREQIELQRKLAEEHEQKNSLQLRLTLVEKQLEEQSTSYQKEIEEVRNEKEATQVKIHELLDAKWKEIAELKTQIEKNDQALSEKNHEVMVSNQALQMKDTNLTNLEKLFADSREQLETKCKELAAAEQQLQELSVHNQQLEESIKQVSSSIELEKINAEQRLQISELEKLKAAQEERIEKLSSNNRNVEILKEEKNDLESKLYRFEEYRDKVATLELENEKIQTELNSWKSLITNELPTPEAVSNKLVFLQNTNANLGERVSSLESQLSNKPANQPLGANEKDAAHITELETKLKELHEQNRRLQRQKSLATQEIDLLRENLKSYDDEEAILSEKNTDMKKLERIEGLVKLVDEYKLKLESMPVSLDVDETSDEVSLQKRRRKNEHKDAGYVTELYRKNQHLLFQVKEKTNIEAFLREQIITLESSIATLRQELAQVTEINSCRVLQHRSNPTLKYERIKAAQLEMLNAENSALKALLEDKKVDCLPIQSFKIAERKALDLKKEVAEREKRIQRLKEIFSVKSLEFREAVFSLFGYKLDFMPNGSVRVTSTYSREDNTAFIFDGESSTMKLVGNPSGPEFERLIRFWCDERKTIPGMLAALTLELLDKND</sequence>
<reference key="1">
    <citation type="journal article" date="2003" name="FEMS Microbiol. Lett.">
        <title>Mad1p, a component of the spindle assembly checkpoint in fission yeast, suppresses a novel septation-defective mutant, sun1, in a cell-division cycle.</title>
        <authorList>
            <person name="Kim I.G."/>
            <person name="Rhee D.K."/>
            <person name="Jeong J.W."/>
            <person name="Kim S.C."/>
            <person name="Won M."/>
            <person name="Lee J."/>
            <person name="Song K.W."/>
            <person name="Kim H.B."/>
        </authorList>
    </citation>
    <scope>NUCLEOTIDE SEQUENCE [GENOMIC DNA]</scope>
    <scope>FUNCTION</scope>
    <source>
        <strain>972 / ATCC 24843</strain>
    </source>
</reference>
<reference key="2">
    <citation type="journal article" date="2002" name="Nature">
        <title>The genome sequence of Schizosaccharomyces pombe.</title>
        <authorList>
            <person name="Wood V."/>
            <person name="Gwilliam R."/>
            <person name="Rajandream M.A."/>
            <person name="Lyne M.H."/>
            <person name="Lyne R."/>
            <person name="Stewart A."/>
            <person name="Sgouros J.G."/>
            <person name="Peat N."/>
            <person name="Hayles J."/>
            <person name="Baker S.G."/>
            <person name="Basham D."/>
            <person name="Bowman S."/>
            <person name="Brooks K."/>
            <person name="Brown D."/>
            <person name="Brown S."/>
            <person name="Chillingworth T."/>
            <person name="Churcher C.M."/>
            <person name="Collins M."/>
            <person name="Connor R."/>
            <person name="Cronin A."/>
            <person name="Davis P."/>
            <person name="Feltwell T."/>
            <person name="Fraser A."/>
            <person name="Gentles S."/>
            <person name="Goble A."/>
            <person name="Hamlin N."/>
            <person name="Harris D.E."/>
            <person name="Hidalgo J."/>
            <person name="Hodgson G."/>
            <person name="Holroyd S."/>
            <person name="Hornsby T."/>
            <person name="Howarth S."/>
            <person name="Huckle E.J."/>
            <person name="Hunt S."/>
            <person name="Jagels K."/>
            <person name="James K.D."/>
            <person name="Jones L."/>
            <person name="Jones M."/>
            <person name="Leather S."/>
            <person name="McDonald S."/>
            <person name="McLean J."/>
            <person name="Mooney P."/>
            <person name="Moule S."/>
            <person name="Mungall K.L."/>
            <person name="Murphy L.D."/>
            <person name="Niblett D."/>
            <person name="Odell C."/>
            <person name="Oliver K."/>
            <person name="O'Neil S."/>
            <person name="Pearson D."/>
            <person name="Quail M.A."/>
            <person name="Rabbinowitsch E."/>
            <person name="Rutherford K.M."/>
            <person name="Rutter S."/>
            <person name="Saunders D."/>
            <person name="Seeger K."/>
            <person name="Sharp S."/>
            <person name="Skelton J."/>
            <person name="Simmonds M.N."/>
            <person name="Squares R."/>
            <person name="Squares S."/>
            <person name="Stevens K."/>
            <person name="Taylor K."/>
            <person name="Taylor R.G."/>
            <person name="Tivey A."/>
            <person name="Walsh S.V."/>
            <person name="Warren T."/>
            <person name="Whitehead S."/>
            <person name="Woodward J.R."/>
            <person name="Volckaert G."/>
            <person name="Aert R."/>
            <person name="Robben J."/>
            <person name="Grymonprez B."/>
            <person name="Weltjens I."/>
            <person name="Vanstreels E."/>
            <person name="Rieger M."/>
            <person name="Schaefer M."/>
            <person name="Mueller-Auer S."/>
            <person name="Gabel C."/>
            <person name="Fuchs M."/>
            <person name="Duesterhoeft A."/>
            <person name="Fritzc C."/>
            <person name="Holzer E."/>
            <person name="Moestl D."/>
            <person name="Hilbert H."/>
            <person name="Borzym K."/>
            <person name="Langer I."/>
            <person name="Beck A."/>
            <person name="Lehrach H."/>
            <person name="Reinhardt R."/>
            <person name="Pohl T.M."/>
            <person name="Eger P."/>
            <person name="Zimmermann W."/>
            <person name="Wedler H."/>
            <person name="Wambutt R."/>
            <person name="Purnelle B."/>
            <person name="Goffeau A."/>
            <person name="Cadieu E."/>
            <person name="Dreano S."/>
            <person name="Gloux S."/>
            <person name="Lelaure V."/>
            <person name="Mottier S."/>
            <person name="Galibert F."/>
            <person name="Aves S.J."/>
            <person name="Xiang Z."/>
            <person name="Hunt C."/>
            <person name="Moore K."/>
            <person name="Hurst S.M."/>
            <person name="Lucas M."/>
            <person name="Rochet M."/>
            <person name="Gaillardin C."/>
            <person name="Tallada V.A."/>
            <person name="Garzon A."/>
            <person name="Thode G."/>
            <person name="Daga R.R."/>
            <person name="Cruzado L."/>
            <person name="Jimenez J."/>
            <person name="Sanchez M."/>
            <person name="del Rey F."/>
            <person name="Benito J."/>
            <person name="Dominguez A."/>
            <person name="Revuelta J.L."/>
            <person name="Moreno S."/>
            <person name="Armstrong J."/>
            <person name="Forsburg S.L."/>
            <person name="Cerutti L."/>
            <person name="Lowe T."/>
            <person name="McCombie W.R."/>
            <person name="Paulsen I."/>
            <person name="Potashkin J."/>
            <person name="Shpakovski G.V."/>
            <person name="Ussery D."/>
            <person name="Barrell B.G."/>
            <person name="Nurse P."/>
        </authorList>
    </citation>
    <scope>NUCLEOTIDE SEQUENCE [LARGE SCALE GENOMIC DNA]</scope>
    <source>
        <strain>972 / ATCC 24843</strain>
    </source>
</reference>
<gene>
    <name type="primary">mad1</name>
    <name type="ORF">SPBC3D6.04c</name>
</gene>
<accession>P87169</accession>
<dbReference type="EMBL" id="AF204761">
    <property type="protein sequence ID" value="AAG45711.1"/>
    <property type="molecule type" value="Genomic_DNA"/>
</dbReference>
<dbReference type="EMBL" id="CU329671">
    <property type="protein sequence ID" value="CAB09124.1"/>
    <property type="molecule type" value="Genomic_DNA"/>
</dbReference>
<dbReference type="PIR" id="T40364">
    <property type="entry name" value="T40364"/>
</dbReference>
<dbReference type="RefSeq" id="NP_595516.1">
    <property type="nucleotide sequence ID" value="NM_001021425.2"/>
</dbReference>
<dbReference type="SMR" id="P87169"/>
<dbReference type="BioGRID" id="276850">
    <property type="interactions" value="99"/>
</dbReference>
<dbReference type="DIP" id="DIP-61700N"/>
<dbReference type="FunCoup" id="P87169">
    <property type="interactions" value="546"/>
</dbReference>
<dbReference type="IntAct" id="P87169">
    <property type="interactions" value="2"/>
</dbReference>
<dbReference type="STRING" id="284812.P87169"/>
<dbReference type="iPTMnet" id="P87169"/>
<dbReference type="PaxDb" id="4896-SPBC3D6.04c.1"/>
<dbReference type="GeneID" id="2540320"/>
<dbReference type="KEGG" id="spo:2540320"/>
<dbReference type="PomBase" id="SPBC3D6.04c">
    <property type="gene designation" value="mad1"/>
</dbReference>
<dbReference type="eggNOG" id="KOG4593">
    <property type="taxonomic scope" value="Eukaryota"/>
</dbReference>
<dbReference type="HOGENOM" id="CLU_403932_0_0_1"/>
<dbReference type="InParanoid" id="P87169"/>
<dbReference type="OMA" id="YKLDFMP"/>
<dbReference type="PhylomeDB" id="P87169"/>
<dbReference type="PRO" id="PR:P87169"/>
<dbReference type="Proteomes" id="UP000002485">
    <property type="component" value="Chromosome II"/>
</dbReference>
<dbReference type="GO" id="GO:0000776">
    <property type="term" value="C:kinetochore"/>
    <property type="evidence" value="ECO:0000314"/>
    <property type="project" value="PomBase"/>
</dbReference>
<dbReference type="GO" id="GO:0072686">
    <property type="term" value="C:mitotic spindle"/>
    <property type="evidence" value="ECO:0000318"/>
    <property type="project" value="GO_Central"/>
</dbReference>
<dbReference type="GO" id="GO:0044732">
    <property type="term" value="C:mitotic spindle pole body"/>
    <property type="evidence" value="ECO:0000314"/>
    <property type="project" value="PomBase"/>
</dbReference>
<dbReference type="GO" id="GO:0005635">
    <property type="term" value="C:nuclear envelope"/>
    <property type="evidence" value="ECO:0000318"/>
    <property type="project" value="GO_Central"/>
</dbReference>
<dbReference type="GO" id="GO:0005634">
    <property type="term" value="C:nucleus"/>
    <property type="evidence" value="ECO:0007005"/>
    <property type="project" value="PomBase"/>
</dbReference>
<dbReference type="GO" id="GO:0140483">
    <property type="term" value="F:kinetochore adaptor activity"/>
    <property type="evidence" value="ECO:0000353"/>
    <property type="project" value="PomBase"/>
</dbReference>
<dbReference type="GO" id="GO:0051315">
    <property type="term" value="P:attachment of mitotic spindle microtubules to kinetochore"/>
    <property type="evidence" value="ECO:0000318"/>
    <property type="project" value="GO_Central"/>
</dbReference>
<dbReference type="GO" id="GO:0051301">
    <property type="term" value="P:cell division"/>
    <property type="evidence" value="ECO:0007669"/>
    <property type="project" value="UniProtKB-KW"/>
</dbReference>
<dbReference type="GO" id="GO:0099606">
    <property type="term" value="P:microtubule plus-end directed mitotic chromosome migration"/>
    <property type="evidence" value="ECO:0000315"/>
    <property type="project" value="PomBase"/>
</dbReference>
<dbReference type="GO" id="GO:0007094">
    <property type="term" value="P:mitotic spindle assembly checkpoint signaling"/>
    <property type="evidence" value="ECO:0000315"/>
    <property type="project" value="PomBase"/>
</dbReference>
<dbReference type="Gene3D" id="1.20.5.170">
    <property type="match status" value="1"/>
</dbReference>
<dbReference type="Gene3D" id="3.30.457.60">
    <property type="match status" value="1"/>
</dbReference>
<dbReference type="InterPro" id="IPR008672">
    <property type="entry name" value="Mad1"/>
</dbReference>
<dbReference type="PANTHER" id="PTHR23168:SF0">
    <property type="entry name" value="MITOTIC SPINDLE ASSEMBLY CHECKPOINT PROTEIN MAD1"/>
    <property type="match status" value="1"/>
</dbReference>
<dbReference type="PANTHER" id="PTHR23168">
    <property type="entry name" value="MITOTIC SPINDLE ASSEMBLY CHECKPOINT PROTEIN MAD1 MITOTIC ARREST DEFICIENT-LIKE PROTEIN 1"/>
    <property type="match status" value="1"/>
</dbReference>
<dbReference type="Pfam" id="PF05557">
    <property type="entry name" value="MAD"/>
    <property type="match status" value="1"/>
</dbReference>
<name>MAD1_SCHPO</name>
<feature type="chain" id="PRO_0000213796" description="Spindle assembly checkpoint component mad1">
    <location>
        <begin position="1"/>
        <end position="689"/>
    </location>
</feature>
<feature type="region of interest" description="Disordered" evidence="3">
    <location>
        <begin position="1"/>
        <end position="54"/>
    </location>
</feature>
<feature type="coiled-coil region" evidence="2">
    <location>
        <begin position="50"/>
        <end position="423"/>
    </location>
</feature>
<feature type="coiled-coil region" evidence="2">
    <location>
        <begin position="486"/>
        <end position="601"/>
    </location>
</feature>
<feature type="compositionally biased region" description="Polar residues" evidence="3">
    <location>
        <begin position="1"/>
        <end position="15"/>
    </location>
</feature>
<protein>
    <recommendedName>
        <fullName>Spindle assembly checkpoint component mad1</fullName>
    </recommendedName>
    <alternativeName>
        <fullName>Mitotic arrest deficient protein 1</fullName>
    </alternativeName>
</protein>
<comment type="function">
    <text evidence="4">Central component of the spindle assembly checkpoint. Has a role in the correct positioning of the septum. Required for anchoring mad2 to the nuclear periphery.</text>
</comment>
<comment type="interaction">
    <interactant intactId="EBI-16079828">
        <id>P87169</id>
    </interactant>
    <interactant intactId="EBI-16168992">
        <id>P24339</id>
        <label>cut7</label>
    </interactant>
    <organismsDiffer>false</organismsDiffer>
    <experiments>3</experiments>
</comment>
<comment type="interaction">
    <interactant intactId="EBI-16079828">
        <id>P87169</id>
    </interactant>
    <interactant intactId="EBI-1269310">
        <id>O14417</id>
        <label>mad2</label>
    </interactant>
    <organismsDiffer>false</organismsDiffer>
    <experiments>4</experiments>
</comment>
<comment type="subcellular location">
    <subcellularLocation>
        <location evidence="1">Nucleus</location>
    </subcellularLocation>
</comment>
<comment type="similarity">
    <text evidence="5">Belongs to the MAD1 family.</text>
</comment>
<evidence type="ECO:0000250" key="1"/>
<evidence type="ECO:0000255" key="2"/>
<evidence type="ECO:0000256" key="3">
    <source>
        <dbReference type="SAM" id="MobiDB-lite"/>
    </source>
</evidence>
<evidence type="ECO:0000269" key="4">
    <source>
    </source>
</evidence>
<evidence type="ECO:0000305" key="5"/>
<keyword id="KW-0131">Cell cycle</keyword>
<keyword id="KW-0132">Cell division</keyword>
<keyword id="KW-0175">Coiled coil</keyword>
<keyword id="KW-0498">Mitosis</keyword>
<keyword id="KW-0539">Nucleus</keyword>
<keyword id="KW-1185">Reference proteome</keyword>